<proteinExistence type="inferred from homology"/>
<reference key="1">
    <citation type="journal article" date="2003" name="Nat. Genet.">
        <title>Comparative analysis of the genome sequences of Bordetella pertussis, Bordetella parapertussis and Bordetella bronchiseptica.</title>
        <authorList>
            <person name="Parkhill J."/>
            <person name="Sebaihia M."/>
            <person name="Preston A."/>
            <person name="Murphy L.D."/>
            <person name="Thomson N.R."/>
            <person name="Harris D.E."/>
            <person name="Holden M.T.G."/>
            <person name="Churcher C.M."/>
            <person name="Bentley S.D."/>
            <person name="Mungall K.L."/>
            <person name="Cerdeno-Tarraga A.-M."/>
            <person name="Temple L."/>
            <person name="James K.D."/>
            <person name="Harris B."/>
            <person name="Quail M.A."/>
            <person name="Achtman M."/>
            <person name="Atkin R."/>
            <person name="Baker S."/>
            <person name="Basham D."/>
            <person name="Bason N."/>
            <person name="Cherevach I."/>
            <person name="Chillingworth T."/>
            <person name="Collins M."/>
            <person name="Cronin A."/>
            <person name="Davis P."/>
            <person name="Doggett J."/>
            <person name="Feltwell T."/>
            <person name="Goble A."/>
            <person name="Hamlin N."/>
            <person name="Hauser H."/>
            <person name="Holroyd S."/>
            <person name="Jagels K."/>
            <person name="Leather S."/>
            <person name="Moule S."/>
            <person name="Norberczak H."/>
            <person name="O'Neil S."/>
            <person name="Ormond D."/>
            <person name="Price C."/>
            <person name="Rabbinowitsch E."/>
            <person name="Rutter S."/>
            <person name="Sanders M."/>
            <person name="Saunders D."/>
            <person name="Seeger K."/>
            <person name="Sharp S."/>
            <person name="Simmonds M."/>
            <person name="Skelton J."/>
            <person name="Squares R."/>
            <person name="Squares S."/>
            <person name="Stevens K."/>
            <person name="Unwin L."/>
            <person name="Whitehead S."/>
            <person name="Barrell B.G."/>
            <person name="Maskell D.J."/>
        </authorList>
    </citation>
    <scope>NUCLEOTIDE SEQUENCE [LARGE SCALE GENOMIC DNA]</scope>
    <source>
        <strain>ATCC BAA-588 / NCTC 13252 / RB50</strain>
    </source>
</reference>
<accession>Q7WJP7</accession>
<gene>
    <name evidence="1" type="primary">ilvD2</name>
    <name type="ordered locus">BB2446</name>
</gene>
<name>ILVD2_BORBR</name>
<organism>
    <name type="scientific">Bordetella bronchiseptica (strain ATCC BAA-588 / NCTC 13252 / RB50)</name>
    <name type="common">Alcaligenes bronchisepticus</name>
    <dbReference type="NCBI Taxonomy" id="257310"/>
    <lineage>
        <taxon>Bacteria</taxon>
        <taxon>Pseudomonadati</taxon>
        <taxon>Pseudomonadota</taxon>
        <taxon>Betaproteobacteria</taxon>
        <taxon>Burkholderiales</taxon>
        <taxon>Alcaligenaceae</taxon>
        <taxon>Bordetella</taxon>
    </lineage>
</organism>
<comment type="function">
    <text evidence="1">Functions in the biosynthesis of branched-chain amino acids. Catalyzes the dehydration of (2R,3R)-2,3-dihydroxy-3-methylpentanoate (2,3-dihydroxy-3-methylvalerate) into 2-oxo-3-methylpentanoate (2-oxo-3-methylvalerate) and of (2R)-2,3-dihydroxy-3-methylbutanoate (2,3-dihydroxyisovalerate) into 2-oxo-3-methylbutanoate (2-oxoisovalerate), the penultimate precursor to L-isoleucine and L-valine, respectively.</text>
</comment>
<comment type="catalytic activity">
    <reaction evidence="1">
        <text>(2R)-2,3-dihydroxy-3-methylbutanoate = 3-methyl-2-oxobutanoate + H2O</text>
        <dbReference type="Rhea" id="RHEA:24809"/>
        <dbReference type="ChEBI" id="CHEBI:11851"/>
        <dbReference type="ChEBI" id="CHEBI:15377"/>
        <dbReference type="ChEBI" id="CHEBI:49072"/>
        <dbReference type="EC" id="4.2.1.9"/>
    </reaction>
    <physiologicalReaction direction="left-to-right" evidence="1">
        <dbReference type="Rhea" id="RHEA:24810"/>
    </physiologicalReaction>
</comment>
<comment type="catalytic activity">
    <reaction evidence="1">
        <text>(2R,3R)-2,3-dihydroxy-3-methylpentanoate = (S)-3-methyl-2-oxopentanoate + H2O</text>
        <dbReference type="Rhea" id="RHEA:27694"/>
        <dbReference type="ChEBI" id="CHEBI:15377"/>
        <dbReference type="ChEBI" id="CHEBI:35146"/>
        <dbReference type="ChEBI" id="CHEBI:49258"/>
        <dbReference type="EC" id="4.2.1.9"/>
    </reaction>
    <physiologicalReaction direction="left-to-right" evidence="1">
        <dbReference type="Rhea" id="RHEA:27695"/>
    </physiologicalReaction>
</comment>
<comment type="cofactor">
    <cofactor evidence="1">
        <name>[2Fe-2S] cluster</name>
        <dbReference type="ChEBI" id="CHEBI:190135"/>
    </cofactor>
    <text evidence="1">Binds 1 [2Fe-2S] cluster per subunit. This cluster acts as a Lewis acid cofactor.</text>
</comment>
<comment type="cofactor">
    <cofactor evidence="1">
        <name>Mg(2+)</name>
        <dbReference type="ChEBI" id="CHEBI:18420"/>
    </cofactor>
</comment>
<comment type="pathway">
    <text evidence="1">Amino-acid biosynthesis; L-isoleucine biosynthesis; L-isoleucine from 2-oxobutanoate: step 3/4.</text>
</comment>
<comment type="pathway">
    <text evidence="1">Amino-acid biosynthesis; L-valine biosynthesis; L-valine from pyruvate: step 3/4.</text>
</comment>
<comment type="subunit">
    <text evidence="1">Homodimer.</text>
</comment>
<comment type="similarity">
    <text evidence="1">Belongs to the IlvD/Edd family.</text>
</comment>
<dbReference type="EC" id="4.2.1.9" evidence="1"/>
<dbReference type="EMBL" id="BX640444">
    <property type="protein sequence ID" value="CAE32940.1"/>
    <property type="molecule type" value="Genomic_DNA"/>
</dbReference>
<dbReference type="SMR" id="Q7WJP7"/>
<dbReference type="KEGG" id="bbr:BB2446"/>
<dbReference type="eggNOG" id="COG0129">
    <property type="taxonomic scope" value="Bacteria"/>
</dbReference>
<dbReference type="HOGENOM" id="CLU_014271_4_2_4"/>
<dbReference type="UniPathway" id="UPA00047">
    <property type="reaction ID" value="UER00057"/>
</dbReference>
<dbReference type="UniPathway" id="UPA00049">
    <property type="reaction ID" value="UER00061"/>
</dbReference>
<dbReference type="Proteomes" id="UP000001027">
    <property type="component" value="Chromosome"/>
</dbReference>
<dbReference type="GO" id="GO:0051537">
    <property type="term" value="F:2 iron, 2 sulfur cluster binding"/>
    <property type="evidence" value="ECO:0007669"/>
    <property type="project" value="UniProtKB-UniRule"/>
</dbReference>
<dbReference type="GO" id="GO:0004160">
    <property type="term" value="F:dihydroxy-acid dehydratase activity"/>
    <property type="evidence" value="ECO:0007669"/>
    <property type="project" value="UniProtKB-UniRule"/>
</dbReference>
<dbReference type="GO" id="GO:0000287">
    <property type="term" value="F:magnesium ion binding"/>
    <property type="evidence" value="ECO:0007669"/>
    <property type="project" value="UniProtKB-UniRule"/>
</dbReference>
<dbReference type="GO" id="GO:0009097">
    <property type="term" value="P:isoleucine biosynthetic process"/>
    <property type="evidence" value="ECO:0007669"/>
    <property type="project" value="UniProtKB-UniRule"/>
</dbReference>
<dbReference type="GO" id="GO:0009099">
    <property type="term" value="P:L-valine biosynthetic process"/>
    <property type="evidence" value="ECO:0007669"/>
    <property type="project" value="UniProtKB-UniRule"/>
</dbReference>
<dbReference type="FunFam" id="3.50.30.80:FF:000001">
    <property type="entry name" value="Dihydroxy-acid dehydratase"/>
    <property type="match status" value="1"/>
</dbReference>
<dbReference type="Gene3D" id="3.50.30.80">
    <property type="entry name" value="IlvD/EDD C-terminal domain-like"/>
    <property type="match status" value="1"/>
</dbReference>
<dbReference type="HAMAP" id="MF_00012">
    <property type="entry name" value="IlvD"/>
    <property type="match status" value="1"/>
</dbReference>
<dbReference type="InterPro" id="IPR050165">
    <property type="entry name" value="DHAD_IlvD/Edd"/>
</dbReference>
<dbReference type="InterPro" id="IPR042096">
    <property type="entry name" value="Dihydro-acid_dehy_C"/>
</dbReference>
<dbReference type="InterPro" id="IPR004404">
    <property type="entry name" value="DihydroxyA_deHydtase"/>
</dbReference>
<dbReference type="InterPro" id="IPR020558">
    <property type="entry name" value="DiOHA_6PGluconate_deHydtase_CS"/>
</dbReference>
<dbReference type="InterPro" id="IPR056740">
    <property type="entry name" value="ILV_EDD_C"/>
</dbReference>
<dbReference type="InterPro" id="IPR000581">
    <property type="entry name" value="ILV_EDD_N"/>
</dbReference>
<dbReference type="InterPro" id="IPR037237">
    <property type="entry name" value="IlvD/EDD_N"/>
</dbReference>
<dbReference type="NCBIfam" id="NF002068">
    <property type="entry name" value="PRK00911.1"/>
    <property type="match status" value="1"/>
</dbReference>
<dbReference type="PANTHER" id="PTHR21000">
    <property type="entry name" value="DIHYDROXY-ACID DEHYDRATASE DAD"/>
    <property type="match status" value="1"/>
</dbReference>
<dbReference type="PANTHER" id="PTHR21000:SF5">
    <property type="entry name" value="DIHYDROXY-ACID DEHYDRATASE, MITOCHONDRIAL"/>
    <property type="match status" value="1"/>
</dbReference>
<dbReference type="Pfam" id="PF24877">
    <property type="entry name" value="ILV_EDD_C"/>
    <property type="match status" value="1"/>
</dbReference>
<dbReference type="Pfam" id="PF00920">
    <property type="entry name" value="ILVD_EDD_N"/>
    <property type="match status" value="1"/>
</dbReference>
<dbReference type="SUPFAM" id="SSF143975">
    <property type="entry name" value="IlvD/EDD N-terminal domain-like"/>
    <property type="match status" value="1"/>
</dbReference>
<dbReference type="SUPFAM" id="SSF52016">
    <property type="entry name" value="LeuD/IlvD-like"/>
    <property type="match status" value="1"/>
</dbReference>
<dbReference type="PROSITE" id="PS00886">
    <property type="entry name" value="ILVD_EDD_1"/>
    <property type="match status" value="1"/>
</dbReference>
<dbReference type="PROSITE" id="PS00887">
    <property type="entry name" value="ILVD_EDD_2"/>
    <property type="match status" value="1"/>
</dbReference>
<evidence type="ECO:0000255" key="1">
    <source>
        <dbReference type="HAMAP-Rule" id="MF_00012"/>
    </source>
</evidence>
<sequence length="570" mass="58917">MSLHKHRSRMVTQGLTRTPHRAFLRATGFDDAALEKSMVGIVSTQGENTPCSMALGPQADRARLGVAAGGGVPVSFSTISISDGTSMNHAGMRMSLLSRETIADSVELVVRGHAYDALVAFAGCDKTLPAMMMAIVRLNVPAVFLYGGATLPGHAASGQVTILDTIEAVGRVQHGTMPAAELKAMERTCTPSAGSCPGQFTANTMAMVGEALGLSPLGSAMMPAVYSERLAIAQRAGEHVMRALAAGGPLPRQLVTRASLENACAAVAATGGSTNAALHIPAIAHEAGIAFTLDDVARVFKRTPLIADLQPGGRYLARDLHEAGGVPVVLKALLDGGHIDGSVLTLDGRTLAEALADTPAPDGKVVRACGQALHPTGGVAVLKGNLSPDGALLKIAGLKSLKFSGPARVFENEEACMRAVSTHAYQPGEVLVIRNEGPRGGPGMREMLSVTAALYGQGMGEKVALLTDGRFSGATRGLCIGYAGPEAAAGGPIALLRDGDMIHIDAEADTLDVALSDEELARRRAAYQAPPQARLAGALEKYAALVRPACLGAVTHSGQVDWPYETPEAE</sequence>
<feature type="chain" id="PRO_0000103435" description="Dihydroxy-acid dehydratase 2">
    <location>
        <begin position="1"/>
        <end position="570"/>
    </location>
</feature>
<feature type="active site" description="Proton acceptor" evidence="1">
    <location>
        <position position="472"/>
    </location>
</feature>
<feature type="binding site" evidence="1">
    <location>
        <position position="51"/>
    </location>
    <ligand>
        <name>[2Fe-2S] cluster</name>
        <dbReference type="ChEBI" id="CHEBI:190135"/>
    </ligand>
</feature>
<feature type="binding site" evidence="1">
    <location>
        <position position="83"/>
    </location>
    <ligand>
        <name>Mg(2+)</name>
        <dbReference type="ChEBI" id="CHEBI:18420"/>
    </ligand>
</feature>
<feature type="binding site" evidence="1">
    <location>
        <position position="124"/>
    </location>
    <ligand>
        <name>[2Fe-2S] cluster</name>
        <dbReference type="ChEBI" id="CHEBI:190135"/>
    </ligand>
</feature>
<feature type="binding site" evidence="1">
    <location>
        <position position="125"/>
    </location>
    <ligand>
        <name>Mg(2+)</name>
        <dbReference type="ChEBI" id="CHEBI:18420"/>
    </ligand>
</feature>
<feature type="binding site" description="via carbamate group" evidence="1">
    <location>
        <position position="126"/>
    </location>
    <ligand>
        <name>Mg(2+)</name>
        <dbReference type="ChEBI" id="CHEBI:18420"/>
    </ligand>
</feature>
<feature type="binding site" evidence="1">
    <location>
        <position position="196"/>
    </location>
    <ligand>
        <name>[2Fe-2S] cluster</name>
        <dbReference type="ChEBI" id="CHEBI:190135"/>
    </ligand>
</feature>
<feature type="binding site" evidence="1">
    <location>
        <position position="446"/>
    </location>
    <ligand>
        <name>Mg(2+)</name>
        <dbReference type="ChEBI" id="CHEBI:18420"/>
    </ligand>
</feature>
<feature type="modified residue" description="N6-carboxylysine" evidence="1">
    <location>
        <position position="126"/>
    </location>
</feature>
<keyword id="KW-0001">2Fe-2S</keyword>
<keyword id="KW-0028">Amino-acid biosynthesis</keyword>
<keyword id="KW-0100">Branched-chain amino acid biosynthesis</keyword>
<keyword id="KW-0408">Iron</keyword>
<keyword id="KW-0411">Iron-sulfur</keyword>
<keyword id="KW-0456">Lyase</keyword>
<keyword id="KW-0460">Magnesium</keyword>
<keyword id="KW-0479">Metal-binding</keyword>
<protein>
    <recommendedName>
        <fullName evidence="1">Dihydroxy-acid dehydratase 2</fullName>
        <shortName evidence="1">DAD 2</shortName>
        <ecNumber evidence="1">4.2.1.9</ecNumber>
    </recommendedName>
</protein>